<proteinExistence type="inferred from homology"/>
<dbReference type="EC" id="2.7.1.23" evidence="1"/>
<dbReference type="EMBL" id="AP006716">
    <property type="protein sequence ID" value="BAE05260.1"/>
    <property type="molecule type" value="Genomic_DNA"/>
</dbReference>
<dbReference type="RefSeq" id="WP_011276221.1">
    <property type="nucleotide sequence ID" value="NC_007168.1"/>
</dbReference>
<dbReference type="SMR" id="Q4L515"/>
<dbReference type="KEGG" id="sha:SH1951"/>
<dbReference type="eggNOG" id="COG0061">
    <property type="taxonomic scope" value="Bacteria"/>
</dbReference>
<dbReference type="HOGENOM" id="CLU_008831_0_3_9"/>
<dbReference type="OrthoDB" id="9774737at2"/>
<dbReference type="Proteomes" id="UP000000543">
    <property type="component" value="Chromosome"/>
</dbReference>
<dbReference type="GO" id="GO:0005737">
    <property type="term" value="C:cytoplasm"/>
    <property type="evidence" value="ECO:0007669"/>
    <property type="project" value="UniProtKB-SubCell"/>
</dbReference>
<dbReference type="GO" id="GO:0005524">
    <property type="term" value="F:ATP binding"/>
    <property type="evidence" value="ECO:0007669"/>
    <property type="project" value="UniProtKB-KW"/>
</dbReference>
<dbReference type="GO" id="GO:0046872">
    <property type="term" value="F:metal ion binding"/>
    <property type="evidence" value="ECO:0007669"/>
    <property type="project" value="UniProtKB-UniRule"/>
</dbReference>
<dbReference type="GO" id="GO:0051287">
    <property type="term" value="F:NAD binding"/>
    <property type="evidence" value="ECO:0007669"/>
    <property type="project" value="UniProtKB-ARBA"/>
</dbReference>
<dbReference type="GO" id="GO:0003951">
    <property type="term" value="F:NAD+ kinase activity"/>
    <property type="evidence" value="ECO:0007669"/>
    <property type="project" value="UniProtKB-UniRule"/>
</dbReference>
<dbReference type="GO" id="GO:0019674">
    <property type="term" value="P:NAD metabolic process"/>
    <property type="evidence" value="ECO:0007669"/>
    <property type="project" value="InterPro"/>
</dbReference>
<dbReference type="GO" id="GO:0006741">
    <property type="term" value="P:NADP biosynthetic process"/>
    <property type="evidence" value="ECO:0007669"/>
    <property type="project" value="UniProtKB-UniRule"/>
</dbReference>
<dbReference type="FunFam" id="2.60.200.30:FF:000002">
    <property type="entry name" value="NAD kinase"/>
    <property type="match status" value="1"/>
</dbReference>
<dbReference type="Gene3D" id="3.40.50.10330">
    <property type="entry name" value="Probable inorganic polyphosphate/atp-NAD kinase, domain 1"/>
    <property type="match status" value="1"/>
</dbReference>
<dbReference type="Gene3D" id="2.60.200.30">
    <property type="entry name" value="Probable inorganic polyphosphate/atp-NAD kinase, domain 2"/>
    <property type="match status" value="1"/>
</dbReference>
<dbReference type="HAMAP" id="MF_00361">
    <property type="entry name" value="NAD_kinase"/>
    <property type="match status" value="1"/>
</dbReference>
<dbReference type="InterPro" id="IPR017438">
    <property type="entry name" value="ATP-NAD_kinase_N"/>
</dbReference>
<dbReference type="InterPro" id="IPR017437">
    <property type="entry name" value="ATP-NAD_kinase_PpnK-typ_C"/>
</dbReference>
<dbReference type="InterPro" id="IPR016064">
    <property type="entry name" value="NAD/diacylglycerol_kinase_sf"/>
</dbReference>
<dbReference type="InterPro" id="IPR002504">
    <property type="entry name" value="NADK"/>
</dbReference>
<dbReference type="NCBIfam" id="NF003424">
    <property type="entry name" value="PRK04885.1"/>
    <property type="match status" value="1"/>
</dbReference>
<dbReference type="PANTHER" id="PTHR20275">
    <property type="entry name" value="NAD KINASE"/>
    <property type="match status" value="1"/>
</dbReference>
<dbReference type="PANTHER" id="PTHR20275:SF0">
    <property type="entry name" value="NAD KINASE"/>
    <property type="match status" value="1"/>
</dbReference>
<dbReference type="Pfam" id="PF01513">
    <property type="entry name" value="NAD_kinase"/>
    <property type="match status" value="1"/>
</dbReference>
<dbReference type="Pfam" id="PF20143">
    <property type="entry name" value="NAD_kinase_C"/>
    <property type="match status" value="1"/>
</dbReference>
<dbReference type="SUPFAM" id="SSF111331">
    <property type="entry name" value="NAD kinase/diacylglycerol kinase-like"/>
    <property type="match status" value="1"/>
</dbReference>
<reference key="1">
    <citation type="journal article" date="2005" name="J. Bacteriol.">
        <title>Whole-genome sequencing of Staphylococcus haemolyticus uncovers the extreme plasticity of its genome and the evolution of human-colonizing staphylococcal species.</title>
        <authorList>
            <person name="Takeuchi F."/>
            <person name="Watanabe S."/>
            <person name="Baba T."/>
            <person name="Yuzawa H."/>
            <person name="Ito T."/>
            <person name="Morimoto Y."/>
            <person name="Kuroda M."/>
            <person name="Cui L."/>
            <person name="Takahashi M."/>
            <person name="Ankai A."/>
            <person name="Baba S."/>
            <person name="Fukui S."/>
            <person name="Lee J.C."/>
            <person name="Hiramatsu K."/>
        </authorList>
    </citation>
    <scope>NUCLEOTIDE SEQUENCE [LARGE SCALE GENOMIC DNA]</scope>
    <source>
        <strain>JCSC1435</strain>
    </source>
</reference>
<comment type="function">
    <text evidence="1">Involved in the regulation of the intracellular balance of NAD and NADP, and is a key enzyme in the biosynthesis of NADP. Catalyzes specifically the phosphorylation on 2'-hydroxyl of the adenosine moiety of NAD to yield NADP.</text>
</comment>
<comment type="catalytic activity">
    <reaction evidence="1">
        <text>NAD(+) + ATP = ADP + NADP(+) + H(+)</text>
        <dbReference type="Rhea" id="RHEA:18629"/>
        <dbReference type="ChEBI" id="CHEBI:15378"/>
        <dbReference type="ChEBI" id="CHEBI:30616"/>
        <dbReference type="ChEBI" id="CHEBI:57540"/>
        <dbReference type="ChEBI" id="CHEBI:58349"/>
        <dbReference type="ChEBI" id="CHEBI:456216"/>
        <dbReference type="EC" id="2.7.1.23"/>
    </reaction>
</comment>
<comment type="cofactor">
    <cofactor evidence="1">
        <name>a divalent metal cation</name>
        <dbReference type="ChEBI" id="CHEBI:60240"/>
    </cofactor>
</comment>
<comment type="subcellular location">
    <subcellularLocation>
        <location evidence="1">Cytoplasm</location>
    </subcellularLocation>
</comment>
<comment type="similarity">
    <text evidence="1">Belongs to the NAD kinase family.</text>
</comment>
<sequence length="269" mass="30383">MRYTILSKGDSKSNALKHKMINHMKDFHMVEDAVNPEIVISVGGDGTLLQAFHQYSHMLSQVAFVGVHTGHLGFYADWLPHEVEKLIIEINNSEFQVIEYPLLEIIVRYNDNGYETRYLALNEATMKTENGSTLVVDVGIRGKQFERFRGDGLCISTPSGSTAYNKALGGALIHPSLEAMQIAEIASINNRVFRTVGSPLVLPKHHTCLITPVNHDTILTTIDHVSLKHKNVNGIQFRVANEKVRFARFRPFPFWKRVHDSFIESEDGR</sequence>
<protein>
    <recommendedName>
        <fullName evidence="1">NAD kinase</fullName>
        <ecNumber evidence="1">2.7.1.23</ecNumber>
    </recommendedName>
    <alternativeName>
        <fullName evidence="1">ATP-dependent NAD kinase</fullName>
    </alternativeName>
</protein>
<accession>Q4L515</accession>
<gene>
    <name evidence="1" type="primary">nadK</name>
    <name type="ordered locus">SH1951</name>
</gene>
<keyword id="KW-0067">ATP-binding</keyword>
<keyword id="KW-0963">Cytoplasm</keyword>
<keyword id="KW-0418">Kinase</keyword>
<keyword id="KW-0520">NAD</keyword>
<keyword id="KW-0521">NADP</keyword>
<keyword id="KW-0547">Nucleotide-binding</keyword>
<keyword id="KW-0808">Transferase</keyword>
<organism>
    <name type="scientific">Staphylococcus haemolyticus (strain JCSC1435)</name>
    <dbReference type="NCBI Taxonomy" id="279808"/>
    <lineage>
        <taxon>Bacteria</taxon>
        <taxon>Bacillati</taxon>
        <taxon>Bacillota</taxon>
        <taxon>Bacilli</taxon>
        <taxon>Bacillales</taxon>
        <taxon>Staphylococcaceae</taxon>
        <taxon>Staphylococcus</taxon>
    </lineage>
</organism>
<evidence type="ECO:0000255" key="1">
    <source>
        <dbReference type="HAMAP-Rule" id="MF_00361"/>
    </source>
</evidence>
<name>NADK_STAHJ</name>
<feature type="chain" id="PRO_0000120666" description="NAD kinase">
    <location>
        <begin position="1"/>
        <end position="269"/>
    </location>
</feature>
<feature type="active site" description="Proton acceptor" evidence="1">
    <location>
        <position position="45"/>
    </location>
</feature>
<feature type="binding site" evidence="1">
    <location>
        <begin position="45"/>
        <end position="46"/>
    </location>
    <ligand>
        <name>NAD(+)</name>
        <dbReference type="ChEBI" id="CHEBI:57540"/>
    </ligand>
</feature>
<feature type="binding site" evidence="1">
    <location>
        <begin position="122"/>
        <end position="123"/>
    </location>
    <ligand>
        <name>NAD(+)</name>
        <dbReference type="ChEBI" id="CHEBI:57540"/>
    </ligand>
</feature>
<feature type="binding site" evidence="1">
    <location>
        <position position="149"/>
    </location>
    <ligand>
        <name>NAD(+)</name>
        <dbReference type="ChEBI" id="CHEBI:57540"/>
    </ligand>
</feature>
<feature type="binding site" evidence="1">
    <location>
        <position position="151"/>
    </location>
    <ligand>
        <name>NAD(+)</name>
        <dbReference type="ChEBI" id="CHEBI:57540"/>
    </ligand>
</feature>
<feature type="binding site" evidence="1">
    <location>
        <position position="186"/>
    </location>
    <ligand>
        <name>NAD(+)</name>
        <dbReference type="ChEBI" id="CHEBI:57540"/>
    </ligand>
</feature>